<feature type="chain" id="PRO_0000166233" description="Glycine cleavage system H protein 1">
    <location>
        <begin position="1"/>
        <end position="127"/>
    </location>
</feature>
<feature type="domain" description="Lipoyl-binding" evidence="2">
    <location>
        <begin position="20"/>
        <end position="101"/>
    </location>
</feature>
<feature type="modified residue" description="N6-lipoyllysine" evidence="1">
    <location>
        <position position="60"/>
    </location>
</feature>
<reference key="1">
    <citation type="journal article" date="2000" name="Nature">
        <title>Complete genome sequence of Pseudomonas aeruginosa PAO1, an opportunistic pathogen.</title>
        <authorList>
            <person name="Stover C.K."/>
            <person name="Pham X.-Q.T."/>
            <person name="Erwin A.L."/>
            <person name="Mizoguchi S.D."/>
            <person name="Warrener P."/>
            <person name="Hickey M.J."/>
            <person name="Brinkman F.S.L."/>
            <person name="Hufnagle W.O."/>
            <person name="Kowalik D.J."/>
            <person name="Lagrou M."/>
            <person name="Garber R.L."/>
            <person name="Goltry L."/>
            <person name="Tolentino E."/>
            <person name="Westbrock-Wadman S."/>
            <person name="Yuan Y."/>
            <person name="Brody L.L."/>
            <person name="Coulter S.N."/>
            <person name="Folger K.R."/>
            <person name="Kas A."/>
            <person name="Larbig K."/>
            <person name="Lim R.M."/>
            <person name="Smith K.A."/>
            <person name="Spencer D.H."/>
            <person name="Wong G.K.-S."/>
            <person name="Wu Z."/>
            <person name="Paulsen I.T."/>
            <person name="Reizer J."/>
            <person name="Saier M.H. Jr."/>
            <person name="Hancock R.E.W."/>
            <person name="Lory S."/>
            <person name="Olson M.V."/>
        </authorList>
    </citation>
    <scope>NUCLEOTIDE SEQUENCE [LARGE SCALE GENOMIC DNA]</scope>
    <source>
        <strain>ATCC 15692 / DSM 22644 / CIP 104116 / JCM 14847 / LMG 12228 / 1C / PRS 101 / PAO1</strain>
    </source>
</reference>
<sequence length="127" mass="13793">MSKLRFTTDHEWLRQDDDGLLTVGITAYAQDALGDVVFVQLPELGEHAAGSEVAVLESVKAASNILMPLDGEVVAINDALPDAPELVNQDPLGEAWFFRFRPADAGAWEKLLDQAAYDRLLNANADA</sequence>
<name>GCSH1_PSEAE</name>
<evidence type="ECO:0000255" key="1">
    <source>
        <dbReference type="HAMAP-Rule" id="MF_00272"/>
    </source>
</evidence>
<evidence type="ECO:0000255" key="2">
    <source>
        <dbReference type="PROSITE-ProRule" id="PRU01066"/>
    </source>
</evidence>
<comment type="function">
    <text evidence="1">The glycine cleavage system catalyzes the degradation of glycine. The H protein shuttles the methylamine group of glycine from the P protein to the T protein.</text>
</comment>
<comment type="cofactor">
    <cofactor evidence="1">
        <name>(R)-lipoate</name>
        <dbReference type="ChEBI" id="CHEBI:83088"/>
    </cofactor>
    <text evidence="1">Binds 1 lipoyl cofactor covalently.</text>
</comment>
<comment type="subunit">
    <text evidence="1">The glycine cleavage system is composed of four proteins: P, T, L and H.</text>
</comment>
<comment type="similarity">
    <text evidence="1">Belongs to the GcvH family.</text>
</comment>
<dbReference type="EMBL" id="AE004091">
    <property type="protein sequence ID" value="AAG05834.1"/>
    <property type="molecule type" value="Genomic_DNA"/>
</dbReference>
<dbReference type="PIR" id="E83339">
    <property type="entry name" value="E83339"/>
</dbReference>
<dbReference type="SMR" id="Q9I136"/>
<dbReference type="STRING" id="208964.PA2446"/>
<dbReference type="PaxDb" id="208964-PA2446"/>
<dbReference type="DNASU" id="882928"/>
<dbReference type="KEGG" id="pae:PA2446"/>
<dbReference type="PATRIC" id="fig|208964.12.peg.2559"/>
<dbReference type="PseudoCAP" id="PA2446"/>
<dbReference type="HOGENOM" id="CLU_097408_2_0_6"/>
<dbReference type="InParanoid" id="Q9I136"/>
<dbReference type="OrthoDB" id="9796712at2"/>
<dbReference type="PhylomeDB" id="Q9I136"/>
<dbReference type="BioCyc" id="PAER208964:G1FZ6-2483-MONOMER"/>
<dbReference type="Proteomes" id="UP000002438">
    <property type="component" value="Chromosome"/>
</dbReference>
<dbReference type="GO" id="GO:0005829">
    <property type="term" value="C:cytosol"/>
    <property type="evidence" value="ECO:0000318"/>
    <property type="project" value="GO_Central"/>
</dbReference>
<dbReference type="GO" id="GO:0005960">
    <property type="term" value="C:glycine cleavage complex"/>
    <property type="evidence" value="ECO:0007669"/>
    <property type="project" value="InterPro"/>
</dbReference>
<dbReference type="GO" id="GO:0019464">
    <property type="term" value="P:glycine decarboxylation via glycine cleavage system"/>
    <property type="evidence" value="ECO:0007669"/>
    <property type="project" value="UniProtKB-UniRule"/>
</dbReference>
<dbReference type="CDD" id="cd06848">
    <property type="entry name" value="GCS_H"/>
    <property type="match status" value="1"/>
</dbReference>
<dbReference type="Gene3D" id="2.40.50.100">
    <property type="match status" value="1"/>
</dbReference>
<dbReference type="HAMAP" id="MF_00272">
    <property type="entry name" value="GcvH"/>
    <property type="match status" value="1"/>
</dbReference>
<dbReference type="InterPro" id="IPR000089">
    <property type="entry name" value="Biotin_lipoyl"/>
</dbReference>
<dbReference type="InterPro" id="IPR002930">
    <property type="entry name" value="GCV_H"/>
</dbReference>
<dbReference type="InterPro" id="IPR033753">
    <property type="entry name" value="GCV_H/Fam206"/>
</dbReference>
<dbReference type="InterPro" id="IPR017453">
    <property type="entry name" value="GCV_H_sub"/>
</dbReference>
<dbReference type="InterPro" id="IPR011053">
    <property type="entry name" value="Single_hybrid_motif"/>
</dbReference>
<dbReference type="NCBIfam" id="TIGR00527">
    <property type="entry name" value="gcvH"/>
    <property type="match status" value="1"/>
</dbReference>
<dbReference type="NCBIfam" id="NF002270">
    <property type="entry name" value="PRK01202.1"/>
    <property type="match status" value="1"/>
</dbReference>
<dbReference type="PANTHER" id="PTHR11715">
    <property type="entry name" value="GLYCINE CLEAVAGE SYSTEM H PROTEIN"/>
    <property type="match status" value="1"/>
</dbReference>
<dbReference type="PANTHER" id="PTHR11715:SF3">
    <property type="entry name" value="GLYCINE CLEAVAGE SYSTEM H PROTEIN-RELATED"/>
    <property type="match status" value="1"/>
</dbReference>
<dbReference type="Pfam" id="PF01597">
    <property type="entry name" value="GCV_H"/>
    <property type="match status" value="1"/>
</dbReference>
<dbReference type="SUPFAM" id="SSF51230">
    <property type="entry name" value="Single hybrid motif"/>
    <property type="match status" value="1"/>
</dbReference>
<dbReference type="PROSITE" id="PS50968">
    <property type="entry name" value="BIOTINYL_LIPOYL"/>
    <property type="match status" value="1"/>
</dbReference>
<keyword id="KW-0450">Lipoyl</keyword>
<keyword id="KW-1185">Reference proteome</keyword>
<organism>
    <name type="scientific">Pseudomonas aeruginosa (strain ATCC 15692 / DSM 22644 / CIP 104116 / JCM 14847 / LMG 12228 / 1C / PRS 101 / PAO1)</name>
    <dbReference type="NCBI Taxonomy" id="208964"/>
    <lineage>
        <taxon>Bacteria</taxon>
        <taxon>Pseudomonadati</taxon>
        <taxon>Pseudomonadota</taxon>
        <taxon>Gammaproteobacteria</taxon>
        <taxon>Pseudomonadales</taxon>
        <taxon>Pseudomonadaceae</taxon>
        <taxon>Pseudomonas</taxon>
    </lineage>
</organism>
<protein>
    <recommendedName>
        <fullName evidence="1">Glycine cleavage system H protein 1</fullName>
    </recommendedName>
</protein>
<accession>Q9I136</accession>
<proteinExistence type="inferred from homology"/>
<gene>
    <name evidence="1" type="primary">gcvH1</name>
    <name type="ordered locus">PA2446</name>
</gene>